<comment type="function">
    <text evidence="1">NDH-1 shuttles electrons from NADH, via FMN and iron-sulfur (Fe-S) centers, to quinones in the respiratory chain. The immediate electron acceptor for the enzyme in this species is believed to be ubiquinone. Couples the redox reaction to proton translocation (for every two electrons transferred, four hydrogen ions are translocated across the cytoplasmic membrane), and thus conserves the redox energy in a proton gradient.</text>
</comment>
<comment type="catalytic activity">
    <reaction evidence="1">
        <text>a quinone + NADH + 5 H(+)(in) = a quinol + NAD(+) + 4 H(+)(out)</text>
        <dbReference type="Rhea" id="RHEA:57888"/>
        <dbReference type="ChEBI" id="CHEBI:15378"/>
        <dbReference type="ChEBI" id="CHEBI:24646"/>
        <dbReference type="ChEBI" id="CHEBI:57540"/>
        <dbReference type="ChEBI" id="CHEBI:57945"/>
        <dbReference type="ChEBI" id="CHEBI:132124"/>
    </reaction>
</comment>
<comment type="subunit">
    <text evidence="1">NDH-1 is composed of 14 different subunits. Subunits NuoB, C, D, E, F, and G constitute the peripheral sector of the complex.</text>
</comment>
<comment type="subcellular location">
    <subcellularLocation>
        <location evidence="1">Cell inner membrane</location>
        <topology evidence="1">Peripheral membrane protein</topology>
        <orientation evidence="1">Cytoplasmic side</orientation>
    </subcellularLocation>
</comment>
<comment type="similarity">
    <text evidence="1">Belongs to the complex I 30 kDa subunit family.</text>
</comment>
<evidence type="ECO:0000255" key="1">
    <source>
        <dbReference type="HAMAP-Rule" id="MF_01357"/>
    </source>
</evidence>
<sequence>MSEEALGELSGYIRERLGDAIEEANLAYGELTLCVPVASLIGVLTFLRDDVQCQFVNLTDISGVDYPQREKRFDVVYQLLSPRQNQRIRVKVQADEDTLVPSAVPVFFGAEWYEREAYDMYGILFSGHPDLRRILTDYGFEGHPLRKDFPLTGFVEVRYNDELKRVVYEPVQLRQEFRNFDFLSPWEGTDYVLPGDEKAKTN</sequence>
<dbReference type="EC" id="7.1.1.-" evidence="1"/>
<dbReference type="EMBL" id="AE014291">
    <property type="protein sequence ID" value="AAN29733.1"/>
    <property type="molecule type" value="Genomic_DNA"/>
</dbReference>
<dbReference type="EMBL" id="CP002997">
    <property type="protein sequence ID" value="AEM18150.1"/>
    <property type="molecule type" value="Genomic_DNA"/>
</dbReference>
<dbReference type="PIR" id="AF3396">
    <property type="entry name" value="AF3396"/>
</dbReference>
<dbReference type="RefSeq" id="WP_002967574.1">
    <property type="nucleotide sequence ID" value="NZ_KN046804.1"/>
</dbReference>
<dbReference type="SMR" id="Q8G1B5"/>
<dbReference type="KEGG" id="bms:BR0804"/>
<dbReference type="KEGG" id="bsi:BS1330_I0800"/>
<dbReference type="PATRIC" id="fig|204722.21.peg.1627"/>
<dbReference type="HOGENOM" id="CLU_042628_2_1_5"/>
<dbReference type="PhylomeDB" id="Q8G1B5"/>
<dbReference type="Proteomes" id="UP000007104">
    <property type="component" value="Chromosome I"/>
</dbReference>
<dbReference type="GO" id="GO:0005886">
    <property type="term" value="C:plasma membrane"/>
    <property type="evidence" value="ECO:0007669"/>
    <property type="project" value="UniProtKB-SubCell"/>
</dbReference>
<dbReference type="GO" id="GO:0008137">
    <property type="term" value="F:NADH dehydrogenase (ubiquinone) activity"/>
    <property type="evidence" value="ECO:0007669"/>
    <property type="project" value="InterPro"/>
</dbReference>
<dbReference type="GO" id="GO:0050136">
    <property type="term" value="F:NADH:ubiquinone reductase (non-electrogenic) activity"/>
    <property type="evidence" value="ECO:0007669"/>
    <property type="project" value="UniProtKB-UniRule"/>
</dbReference>
<dbReference type="GO" id="GO:0048038">
    <property type="term" value="F:quinone binding"/>
    <property type="evidence" value="ECO:0007669"/>
    <property type="project" value="UniProtKB-KW"/>
</dbReference>
<dbReference type="Gene3D" id="3.30.460.80">
    <property type="entry name" value="NADH:ubiquinone oxidoreductase, 30kDa subunit"/>
    <property type="match status" value="1"/>
</dbReference>
<dbReference type="HAMAP" id="MF_01357">
    <property type="entry name" value="NDH1_NuoC"/>
    <property type="match status" value="1"/>
</dbReference>
<dbReference type="InterPro" id="IPR010218">
    <property type="entry name" value="NADH_DH_suC"/>
</dbReference>
<dbReference type="InterPro" id="IPR037232">
    <property type="entry name" value="NADH_quin_OxRdtase_su_C/D-like"/>
</dbReference>
<dbReference type="InterPro" id="IPR001268">
    <property type="entry name" value="NADH_UbQ_OxRdtase_30kDa_su"/>
</dbReference>
<dbReference type="InterPro" id="IPR020396">
    <property type="entry name" value="NADH_UbQ_OxRdtase_CS"/>
</dbReference>
<dbReference type="NCBIfam" id="TIGR01961">
    <property type="entry name" value="NuoC_fam"/>
    <property type="match status" value="1"/>
</dbReference>
<dbReference type="NCBIfam" id="NF004730">
    <property type="entry name" value="PRK06074.1-1"/>
    <property type="match status" value="1"/>
</dbReference>
<dbReference type="NCBIfam" id="NF004733">
    <property type="entry name" value="PRK06074.1-5"/>
    <property type="match status" value="1"/>
</dbReference>
<dbReference type="PANTHER" id="PTHR10884:SF14">
    <property type="entry name" value="NADH DEHYDROGENASE [UBIQUINONE] IRON-SULFUR PROTEIN 3, MITOCHONDRIAL"/>
    <property type="match status" value="1"/>
</dbReference>
<dbReference type="PANTHER" id="PTHR10884">
    <property type="entry name" value="NADH DEHYDROGENASE UBIQUINONE IRON-SULFUR PROTEIN 3"/>
    <property type="match status" value="1"/>
</dbReference>
<dbReference type="Pfam" id="PF00329">
    <property type="entry name" value="Complex1_30kDa"/>
    <property type="match status" value="1"/>
</dbReference>
<dbReference type="SUPFAM" id="SSF143243">
    <property type="entry name" value="Nqo5-like"/>
    <property type="match status" value="1"/>
</dbReference>
<dbReference type="PROSITE" id="PS00542">
    <property type="entry name" value="COMPLEX1_30K"/>
    <property type="match status" value="1"/>
</dbReference>
<reference key="1">
    <citation type="journal article" date="2002" name="Proc. Natl. Acad. Sci. U.S.A.">
        <title>The Brucella suis genome reveals fundamental similarities between animal and plant pathogens and symbionts.</title>
        <authorList>
            <person name="Paulsen I.T."/>
            <person name="Seshadri R."/>
            <person name="Nelson K.E."/>
            <person name="Eisen J.A."/>
            <person name="Heidelberg J.F."/>
            <person name="Read T.D."/>
            <person name="Dodson R.J."/>
            <person name="Umayam L.A."/>
            <person name="Brinkac L.M."/>
            <person name="Beanan M.J."/>
            <person name="Daugherty S.C."/>
            <person name="DeBoy R.T."/>
            <person name="Durkin A.S."/>
            <person name="Kolonay J.F."/>
            <person name="Madupu R."/>
            <person name="Nelson W.C."/>
            <person name="Ayodeji B."/>
            <person name="Kraul M."/>
            <person name="Shetty J."/>
            <person name="Malek J.A."/>
            <person name="Van Aken S.E."/>
            <person name="Riedmuller S."/>
            <person name="Tettelin H."/>
            <person name="Gill S.R."/>
            <person name="White O."/>
            <person name="Salzberg S.L."/>
            <person name="Hoover D.L."/>
            <person name="Lindler L.E."/>
            <person name="Halling S.M."/>
            <person name="Boyle S.M."/>
            <person name="Fraser C.M."/>
        </authorList>
    </citation>
    <scope>NUCLEOTIDE SEQUENCE [LARGE SCALE GENOMIC DNA]</scope>
    <source>
        <strain>1330</strain>
    </source>
</reference>
<reference key="2">
    <citation type="journal article" date="2011" name="J. Bacteriol.">
        <title>Revised genome sequence of Brucella suis 1330.</title>
        <authorList>
            <person name="Tae H."/>
            <person name="Shallom S."/>
            <person name="Settlage R."/>
            <person name="Preston D."/>
            <person name="Adams L.G."/>
            <person name="Garner H.R."/>
        </authorList>
    </citation>
    <scope>NUCLEOTIDE SEQUENCE [LARGE SCALE GENOMIC DNA]</scope>
    <source>
        <strain>1330</strain>
    </source>
</reference>
<proteinExistence type="inferred from homology"/>
<keyword id="KW-0997">Cell inner membrane</keyword>
<keyword id="KW-1003">Cell membrane</keyword>
<keyword id="KW-0472">Membrane</keyword>
<keyword id="KW-0520">NAD</keyword>
<keyword id="KW-0874">Quinone</keyword>
<keyword id="KW-1278">Translocase</keyword>
<keyword id="KW-0813">Transport</keyword>
<keyword id="KW-0830">Ubiquinone</keyword>
<protein>
    <recommendedName>
        <fullName evidence="1">NADH-quinone oxidoreductase subunit C</fullName>
        <ecNumber evidence="1">7.1.1.-</ecNumber>
    </recommendedName>
    <alternativeName>
        <fullName evidence="1">NADH dehydrogenase I subunit C</fullName>
    </alternativeName>
    <alternativeName>
        <fullName evidence="1">NDH-1 subunit C</fullName>
    </alternativeName>
</protein>
<gene>
    <name evidence="1" type="primary">nuoC</name>
    <name type="ordered locus">BR0804</name>
    <name type="ordered locus">BS1330_I0800</name>
</gene>
<organism>
    <name type="scientific">Brucella suis biovar 1 (strain 1330)</name>
    <dbReference type="NCBI Taxonomy" id="204722"/>
    <lineage>
        <taxon>Bacteria</taxon>
        <taxon>Pseudomonadati</taxon>
        <taxon>Pseudomonadota</taxon>
        <taxon>Alphaproteobacteria</taxon>
        <taxon>Hyphomicrobiales</taxon>
        <taxon>Brucellaceae</taxon>
        <taxon>Brucella/Ochrobactrum group</taxon>
        <taxon>Brucella</taxon>
    </lineage>
</organism>
<name>NUOC_BRUSU</name>
<accession>Q8G1B5</accession>
<accession>G0K8V2</accession>
<feature type="chain" id="PRO_0000358056" description="NADH-quinone oxidoreductase subunit C">
    <location>
        <begin position="1"/>
        <end position="202"/>
    </location>
</feature>